<keyword id="KW-0378">Hydrolase</keyword>
<keyword id="KW-0460">Magnesium</keyword>
<keyword id="KW-0464">Manganese</keyword>
<keyword id="KW-0479">Metal-binding</keyword>
<keyword id="KW-0520">NAD</keyword>
<keyword id="KW-1185">Reference proteome</keyword>
<keyword id="KW-0862">Zinc</keyword>
<gene>
    <name evidence="1" type="primary">nudC</name>
    <name type="ordered locus">Ecok1_39630</name>
    <name type="ORF">APECO1_2479</name>
</gene>
<evidence type="ECO:0000255" key="1">
    <source>
        <dbReference type="HAMAP-Rule" id="MF_00297"/>
    </source>
</evidence>
<accession>A1AIG7</accession>
<organism>
    <name type="scientific">Escherichia coli O1:K1 / APEC</name>
    <dbReference type="NCBI Taxonomy" id="405955"/>
    <lineage>
        <taxon>Bacteria</taxon>
        <taxon>Pseudomonadati</taxon>
        <taxon>Pseudomonadota</taxon>
        <taxon>Gammaproteobacteria</taxon>
        <taxon>Enterobacterales</taxon>
        <taxon>Enterobacteriaceae</taxon>
        <taxon>Escherichia</taxon>
    </lineage>
</organism>
<proteinExistence type="inferred from homology"/>
<reference key="1">
    <citation type="journal article" date="2007" name="J. Bacteriol.">
        <title>The genome sequence of avian pathogenic Escherichia coli strain O1:K1:H7 shares strong similarities with human extraintestinal pathogenic E. coli genomes.</title>
        <authorList>
            <person name="Johnson T.J."/>
            <person name="Kariyawasam S."/>
            <person name="Wannemuehler Y."/>
            <person name="Mangiamele P."/>
            <person name="Johnson S.J."/>
            <person name="Doetkott C."/>
            <person name="Skyberg J.A."/>
            <person name="Lynne A.M."/>
            <person name="Johnson J.R."/>
            <person name="Nolan L.K."/>
        </authorList>
    </citation>
    <scope>NUCLEOTIDE SEQUENCE [LARGE SCALE GENOMIC DNA]</scope>
</reference>
<comment type="function">
    <text evidence="1">mRNA decapping enzyme that specifically removes the nicotinamide adenine dinucleotide (NAD) cap from a subset of mRNAs by hydrolyzing the diphosphate linkage to produce nicotinamide mononucleotide (NMN) and 5' monophosphate mRNA. The NAD-cap is present at the 5'-end of some mRNAs and stabilizes RNA against 5'-processing. Has preference for mRNAs with a 5'-end purine. Catalyzes the hydrolysis of a broad range of dinucleotide pyrophosphates.</text>
</comment>
<comment type="catalytic activity">
    <reaction evidence="1">
        <text>a 5'-end NAD(+)-phospho-ribonucleoside in mRNA + H2O = a 5'-end phospho-adenosine-phospho-ribonucleoside in mRNA + beta-nicotinamide D-ribonucleotide + 2 H(+)</text>
        <dbReference type="Rhea" id="RHEA:60876"/>
        <dbReference type="Rhea" id="RHEA-COMP:15698"/>
        <dbReference type="Rhea" id="RHEA-COMP:15719"/>
        <dbReference type="ChEBI" id="CHEBI:14649"/>
        <dbReference type="ChEBI" id="CHEBI:15377"/>
        <dbReference type="ChEBI" id="CHEBI:15378"/>
        <dbReference type="ChEBI" id="CHEBI:144029"/>
        <dbReference type="ChEBI" id="CHEBI:144051"/>
    </reaction>
    <physiologicalReaction direction="left-to-right" evidence="1">
        <dbReference type="Rhea" id="RHEA:60877"/>
    </physiologicalReaction>
</comment>
<comment type="catalytic activity">
    <reaction evidence="1">
        <text>NAD(+) + H2O = beta-nicotinamide D-ribonucleotide + AMP + 2 H(+)</text>
        <dbReference type="Rhea" id="RHEA:11800"/>
        <dbReference type="ChEBI" id="CHEBI:14649"/>
        <dbReference type="ChEBI" id="CHEBI:15377"/>
        <dbReference type="ChEBI" id="CHEBI:15378"/>
        <dbReference type="ChEBI" id="CHEBI:57540"/>
        <dbReference type="ChEBI" id="CHEBI:456215"/>
        <dbReference type="EC" id="3.6.1.22"/>
    </reaction>
</comment>
<comment type="catalytic activity">
    <reaction evidence="1">
        <text>NADH + H2O = reduced beta-nicotinamide D-ribonucleotide + AMP + 2 H(+)</text>
        <dbReference type="Rhea" id="RHEA:48868"/>
        <dbReference type="ChEBI" id="CHEBI:15377"/>
        <dbReference type="ChEBI" id="CHEBI:15378"/>
        <dbReference type="ChEBI" id="CHEBI:57945"/>
        <dbReference type="ChEBI" id="CHEBI:90832"/>
        <dbReference type="ChEBI" id="CHEBI:456215"/>
        <dbReference type="EC" id="3.6.1.22"/>
    </reaction>
</comment>
<comment type="cofactor">
    <cofactor evidence="1">
        <name>Mg(2+)</name>
        <dbReference type="ChEBI" id="CHEBI:18420"/>
    </cofactor>
    <cofactor evidence="1">
        <name>Mn(2+)</name>
        <dbReference type="ChEBI" id="CHEBI:29035"/>
    </cofactor>
    <text evidence="1">Divalent metal cations. Mg(2+) or Mn(2+).</text>
</comment>
<comment type="cofactor">
    <cofactor evidence="1">
        <name>Zn(2+)</name>
        <dbReference type="ChEBI" id="CHEBI:29105"/>
    </cofactor>
    <text evidence="1">Binds 1 zinc ion per subunit.</text>
</comment>
<comment type="subunit">
    <text evidence="1">Homodimer.</text>
</comment>
<comment type="similarity">
    <text evidence="1">Belongs to the Nudix hydrolase family. NudC subfamily.</text>
</comment>
<protein>
    <recommendedName>
        <fullName evidence="1">NAD-capped RNA hydrolase NudC</fullName>
        <shortName evidence="1">DeNADding enzyme NudC</shortName>
        <ecNumber evidence="1">3.6.1.-</ecNumber>
    </recommendedName>
    <alternativeName>
        <fullName evidence="1">NADH pyrophosphatase</fullName>
        <ecNumber evidence="1">3.6.1.22</ecNumber>
    </alternativeName>
</protein>
<name>NUDC_ECOK1</name>
<feature type="chain" id="PRO_1000021904" description="NAD-capped RNA hydrolase NudC">
    <location>
        <begin position="1"/>
        <end position="257"/>
    </location>
</feature>
<feature type="domain" description="Nudix hydrolase" evidence="1">
    <location>
        <begin position="125"/>
        <end position="248"/>
    </location>
</feature>
<feature type="short sequence motif" description="Nudix box" evidence="1">
    <location>
        <begin position="159"/>
        <end position="180"/>
    </location>
</feature>
<feature type="binding site" evidence="1">
    <location>
        <position position="25"/>
    </location>
    <ligand>
        <name>substrate</name>
    </ligand>
</feature>
<feature type="binding site" evidence="1">
    <location>
        <position position="69"/>
    </location>
    <ligand>
        <name>substrate</name>
    </ligand>
</feature>
<feature type="binding site" evidence="1">
    <location>
        <position position="98"/>
    </location>
    <ligand>
        <name>Zn(2+)</name>
        <dbReference type="ChEBI" id="CHEBI:29105"/>
    </ligand>
</feature>
<feature type="binding site" evidence="1">
    <location>
        <position position="101"/>
    </location>
    <ligand>
        <name>Zn(2+)</name>
        <dbReference type="ChEBI" id="CHEBI:29105"/>
    </ligand>
</feature>
<feature type="binding site" evidence="1">
    <location>
        <position position="111"/>
    </location>
    <ligand>
        <name>substrate</name>
    </ligand>
</feature>
<feature type="binding site" evidence="1">
    <location>
        <position position="116"/>
    </location>
    <ligand>
        <name>Zn(2+)</name>
        <dbReference type="ChEBI" id="CHEBI:29105"/>
    </ligand>
</feature>
<feature type="binding site" evidence="1">
    <location>
        <position position="119"/>
    </location>
    <ligand>
        <name>Zn(2+)</name>
        <dbReference type="ChEBI" id="CHEBI:29105"/>
    </ligand>
</feature>
<feature type="binding site" evidence="1">
    <location>
        <position position="124"/>
    </location>
    <ligand>
        <name>substrate</name>
    </ligand>
</feature>
<feature type="binding site" evidence="1">
    <location>
        <position position="158"/>
    </location>
    <ligand>
        <name>a divalent metal cation</name>
        <dbReference type="ChEBI" id="CHEBI:60240"/>
        <label>1</label>
    </ligand>
</feature>
<feature type="binding site" evidence="1">
    <location>
        <position position="174"/>
    </location>
    <ligand>
        <name>a divalent metal cation</name>
        <dbReference type="ChEBI" id="CHEBI:60240"/>
        <label>2</label>
    </ligand>
</feature>
<feature type="binding site" evidence="1">
    <location>
        <position position="174"/>
    </location>
    <ligand>
        <name>a divalent metal cation</name>
        <dbReference type="ChEBI" id="CHEBI:60240"/>
        <label>3</label>
    </ligand>
</feature>
<feature type="binding site" evidence="1">
    <location>
        <position position="178"/>
    </location>
    <ligand>
        <name>a divalent metal cation</name>
        <dbReference type="ChEBI" id="CHEBI:60240"/>
        <label>1</label>
    </ligand>
</feature>
<feature type="binding site" evidence="1">
    <location>
        <position position="178"/>
    </location>
    <ligand>
        <name>a divalent metal cation</name>
        <dbReference type="ChEBI" id="CHEBI:60240"/>
        <label>3</label>
    </ligand>
</feature>
<feature type="binding site" evidence="1">
    <location>
        <begin position="192"/>
        <end position="199"/>
    </location>
    <ligand>
        <name>substrate</name>
    </ligand>
</feature>
<feature type="binding site" evidence="1">
    <location>
        <position position="219"/>
    </location>
    <ligand>
        <name>a divalent metal cation</name>
        <dbReference type="ChEBI" id="CHEBI:60240"/>
        <label>1</label>
    </ligand>
</feature>
<feature type="binding site" evidence="1">
    <location>
        <position position="219"/>
    </location>
    <ligand>
        <name>a divalent metal cation</name>
        <dbReference type="ChEBI" id="CHEBI:60240"/>
        <label>3</label>
    </ligand>
</feature>
<feature type="binding site" evidence="1">
    <location>
        <position position="241"/>
    </location>
    <ligand>
        <name>substrate</name>
    </ligand>
</feature>
<dbReference type="EC" id="3.6.1.-" evidence="1"/>
<dbReference type="EC" id="3.6.1.22" evidence="1"/>
<dbReference type="EMBL" id="CP000468">
    <property type="protein sequence ID" value="ABJ03457.1"/>
    <property type="molecule type" value="Genomic_DNA"/>
</dbReference>
<dbReference type="RefSeq" id="WP_000373935.1">
    <property type="nucleotide sequence ID" value="NZ_CADILS010000053.1"/>
</dbReference>
<dbReference type="SMR" id="A1AIG7"/>
<dbReference type="KEGG" id="ecv:APECO1_2479"/>
<dbReference type="HOGENOM" id="CLU_037162_0_1_6"/>
<dbReference type="Proteomes" id="UP000008216">
    <property type="component" value="Chromosome"/>
</dbReference>
<dbReference type="GO" id="GO:0005829">
    <property type="term" value="C:cytosol"/>
    <property type="evidence" value="ECO:0007669"/>
    <property type="project" value="TreeGrafter"/>
</dbReference>
<dbReference type="GO" id="GO:0000287">
    <property type="term" value="F:magnesium ion binding"/>
    <property type="evidence" value="ECO:0007669"/>
    <property type="project" value="UniProtKB-UniRule"/>
</dbReference>
<dbReference type="GO" id="GO:0030145">
    <property type="term" value="F:manganese ion binding"/>
    <property type="evidence" value="ECO:0007669"/>
    <property type="project" value="UniProtKB-UniRule"/>
</dbReference>
<dbReference type="GO" id="GO:0000210">
    <property type="term" value="F:NAD+ diphosphatase activity"/>
    <property type="evidence" value="ECO:0007669"/>
    <property type="project" value="UniProtKB-UniRule"/>
</dbReference>
<dbReference type="GO" id="GO:0035529">
    <property type="term" value="F:NADH pyrophosphatase activity"/>
    <property type="evidence" value="ECO:0007669"/>
    <property type="project" value="TreeGrafter"/>
</dbReference>
<dbReference type="GO" id="GO:0110153">
    <property type="term" value="F:RNA NAD-cap (NMN-forming) hydrolase activity"/>
    <property type="evidence" value="ECO:0007669"/>
    <property type="project" value="RHEA"/>
</dbReference>
<dbReference type="GO" id="GO:0008270">
    <property type="term" value="F:zinc ion binding"/>
    <property type="evidence" value="ECO:0007669"/>
    <property type="project" value="UniProtKB-UniRule"/>
</dbReference>
<dbReference type="GO" id="GO:0019677">
    <property type="term" value="P:NAD catabolic process"/>
    <property type="evidence" value="ECO:0007669"/>
    <property type="project" value="TreeGrafter"/>
</dbReference>
<dbReference type="GO" id="GO:0006734">
    <property type="term" value="P:NADH metabolic process"/>
    <property type="evidence" value="ECO:0007669"/>
    <property type="project" value="TreeGrafter"/>
</dbReference>
<dbReference type="GO" id="GO:0006742">
    <property type="term" value="P:NADP catabolic process"/>
    <property type="evidence" value="ECO:0007669"/>
    <property type="project" value="TreeGrafter"/>
</dbReference>
<dbReference type="CDD" id="cd03429">
    <property type="entry name" value="NUDIX_NADH_pyrophosphatase_Nudt13"/>
    <property type="match status" value="1"/>
</dbReference>
<dbReference type="FunFam" id="3.90.79.10:FF:000004">
    <property type="entry name" value="NADH pyrophosphatase"/>
    <property type="match status" value="1"/>
</dbReference>
<dbReference type="FunFam" id="3.90.79.20:FF:000001">
    <property type="entry name" value="NADH pyrophosphatase"/>
    <property type="match status" value="1"/>
</dbReference>
<dbReference type="Gene3D" id="3.90.79.20">
    <property type="match status" value="1"/>
</dbReference>
<dbReference type="Gene3D" id="3.90.79.10">
    <property type="entry name" value="Nucleoside Triphosphate Pyrophosphohydrolase"/>
    <property type="match status" value="1"/>
</dbReference>
<dbReference type="HAMAP" id="MF_00297">
    <property type="entry name" value="Nudix_NudC"/>
    <property type="match status" value="1"/>
</dbReference>
<dbReference type="InterPro" id="IPR050241">
    <property type="entry name" value="NAD-cap_RNA_hydrolase_NudC"/>
</dbReference>
<dbReference type="InterPro" id="IPR049734">
    <property type="entry name" value="NudC-like_C"/>
</dbReference>
<dbReference type="InterPro" id="IPR015797">
    <property type="entry name" value="NUDIX_hydrolase-like_dom_sf"/>
</dbReference>
<dbReference type="InterPro" id="IPR020084">
    <property type="entry name" value="NUDIX_hydrolase_CS"/>
</dbReference>
<dbReference type="InterPro" id="IPR000086">
    <property type="entry name" value="NUDIX_hydrolase_dom"/>
</dbReference>
<dbReference type="InterPro" id="IPR022925">
    <property type="entry name" value="RNA_Hydrolase_NudC"/>
</dbReference>
<dbReference type="InterPro" id="IPR015376">
    <property type="entry name" value="Znr_NADH_PPase"/>
</dbReference>
<dbReference type="NCBIfam" id="NF001299">
    <property type="entry name" value="PRK00241.1"/>
    <property type="match status" value="1"/>
</dbReference>
<dbReference type="PANTHER" id="PTHR42904:SF6">
    <property type="entry name" value="NAD-CAPPED RNA HYDROLASE NUDT12"/>
    <property type="match status" value="1"/>
</dbReference>
<dbReference type="PANTHER" id="PTHR42904">
    <property type="entry name" value="NUDIX HYDROLASE, NUDC SUBFAMILY"/>
    <property type="match status" value="1"/>
</dbReference>
<dbReference type="Pfam" id="PF00293">
    <property type="entry name" value="NUDIX"/>
    <property type="match status" value="1"/>
</dbReference>
<dbReference type="Pfam" id="PF09297">
    <property type="entry name" value="Zn_ribbon_NUD"/>
    <property type="match status" value="1"/>
</dbReference>
<dbReference type="SUPFAM" id="SSF55811">
    <property type="entry name" value="Nudix"/>
    <property type="match status" value="2"/>
</dbReference>
<dbReference type="PROSITE" id="PS51462">
    <property type="entry name" value="NUDIX"/>
    <property type="match status" value="1"/>
</dbReference>
<dbReference type="PROSITE" id="PS00893">
    <property type="entry name" value="NUDIX_BOX"/>
    <property type="match status" value="1"/>
</dbReference>
<sequence length="257" mass="29711">MDRIIEKLDHGWWVVSHEQKLWLPKGELPYGEAANFDLVGQRALQIGEWQGEPVWLVQLQRRHDMGSVRQVIDLDVGLFQLAGRGVQLAEFYRSHKYCGYCGHEMYPSKTEWAMLCSHCRERYYPQIAPCIIVAIRRDDSILLAQHTRHRNGVHTVLAGFVEVGETLEQAVAREVMEESGIKVKNLRYVTSQPWPFPQSLMTAFMAEYDSGEIVIDPKELLEAHWYRYDDLPLLPPPGTVARRLIEDTVAMCRAEYE</sequence>